<protein>
    <recommendedName>
        <fullName>4-alpha-glucanotransferase</fullName>
        <ecNumber>2.4.1.25</ecNumber>
    </recommendedName>
    <alternativeName>
        <fullName>Amylomaltase</fullName>
    </alternativeName>
    <alternativeName>
        <fullName>Disproportionating enzyme</fullName>
        <shortName>D-enzyme</shortName>
    </alternativeName>
</protein>
<reference key="1">
    <citation type="journal article" date="1996" name="DNA Res.">
        <title>Sequence analysis of the genome of the unicellular cyanobacterium Synechocystis sp. strain PCC6803. II. Sequence determination of the entire genome and assignment of potential protein-coding regions.</title>
        <authorList>
            <person name="Kaneko T."/>
            <person name="Sato S."/>
            <person name="Kotani H."/>
            <person name="Tanaka A."/>
            <person name="Asamizu E."/>
            <person name="Nakamura Y."/>
            <person name="Miyajima N."/>
            <person name="Hirosawa M."/>
            <person name="Sugiura M."/>
            <person name="Sasamoto S."/>
            <person name="Kimura T."/>
            <person name="Hosouchi T."/>
            <person name="Matsuno A."/>
            <person name="Muraki A."/>
            <person name="Nakazaki N."/>
            <person name="Naruo K."/>
            <person name="Okumura S."/>
            <person name="Shimpo S."/>
            <person name="Takeuchi C."/>
            <person name="Wada T."/>
            <person name="Watanabe A."/>
            <person name="Yamada M."/>
            <person name="Yasuda M."/>
            <person name="Tabata S."/>
        </authorList>
    </citation>
    <scope>NUCLEOTIDE SEQUENCE [LARGE SCALE GENOMIC DNA]</scope>
    <source>
        <strain>ATCC 27184 / PCC 6803 / Kazusa</strain>
    </source>
</reference>
<organism>
    <name type="scientific">Synechocystis sp. (strain ATCC 27184 / PCC 6803 / Kazusa)</name>
    <dbReference type="NCBI Taxonomy" id="1111708"/>
    <lineage>
        <taxon>Bacteria</taxon>
        <taxon>Bacillati</taxon>
        <taxon>Cyanobacteriota</taxon>
        <taxon>Cyanophyceae</taxon>
        <taxon>Synechococcales</taxon>
        <taxon>Merismopediaceae</taxon>
        <taxon>Synechocystis</taxon>
    </lineage>
</organism>
<feature type="chain" id="PRO_0000170131" description="4-alpha-glucanotransferase">
    <location>
        <begin position="1"/>
        <end position="505"/>
    </location>
</feature>
<accession>P72785</accession>
<comment type="catalytic activity">
    <reaction>
        <text>Transfers a segment of a (1-&gt;4)-alpha-D-glucan to a new position in an acceptor, which may be glucose or a (1-&gt;4)-alpha-D-glucan.</text>
        <dbReference type="EC" id="2.4.1.25"/>
    </reaction>
</comment>
<comment type="subcellular location">
    <subcellularLocation>
        <location evidence="1">Cytoplasm</location>
    </subcellularLocation>
</comment>
<comment type="similarity">
    <text evidence="2">Belongs to the disproportionating enzyme family.</text>
</comment>
<sequence>MLDKRCSGILLHPTSLPSRFGIGDLGDGAFQFIDFLADADQSVWQILPLGPTGFGNSPYLCYSALAINPWLISLDRLAEEGFLPPSLLDQAPPFTNPRVDYDQAIAYKSQVLKQAFAQFRTNIELAIEQEFAEFCQAQSDWLADYALFMAIKEAHNGAGWHQWDKDIAWREPEALKIWGDRLKTEVLYHQFLQFLGFRQWQEVKAYANQRHIAIFGDLPIYVAHDSADVWANPENFCLDPETGEAAMMAGVPPDYFSATGQLWGNPVYDWETLKATGFAWWIKRFKANLQYLDIVRIDHFRGFESYWGVPQGEKTAENGEWYPAPGKEFFQALGKALGDNLPIVAEDLGVITPEVEALRDEFNFPGMKVLHFAFDSDRGNPFLPFNYSNGNAVVYTGTHDNDTTVGWFQERSEDDQQKVINYLGCVCNEGIHWSLIRLASSSVAALAIFPLQDILGLGSDCRMNLPGTAAGNWGWRYHPDQLNDWLSGHLSFITELYGRRIYHTD</sequence>
<proteinExistence type="inferred from homology"/>
<evidence type="ECO:0000250" key="1"/>
<evidence type="ECO:0000305" key="2"/>
<name>MALQ_SYNY3</name>
<dbReference type="EC" id="2.4.1.25"/>
<dbReference type="EMBL" id="BA000022">
    <property type="protein sequence ID" value="BAA16800.1"/>
    <property type="molecule type" value="Genomic_DNA"/>
</dbReference>
<dbReference type="PIR" id="S74648">
    <property type="entry name" value="S74648"/>
</dbReference>
<dbReference type="SMR" id="P72785"/>
<dbReference type="IntAct" id="P72785">
    <property type="interactions" value="1"/>
</dbReference>
<dbReference type="STRING" id="1148.gene:10497656"/>
<dbReference type="CAZy" id="GH77">
    <property type="family name" value="Glycoside Hydrolase Family 77"/>
</dbReference>
<dbReference type="PaxDb" id="1148-1651873"/>
<dbReference type="EnsemblBacteria" id="BAA16800">
    <property type="protein sequence ID" value="BAA16800"/>
    <property type="gene ID" value="BAA16800"/>
</dbReference>
<dbReference type="KEGG" id="syn:sll1676"/>
<dbReference type="eggNOG" id="COG1640">
    <property type="taxonomic scope" value="Bacteria"/>
</dbReference>
<dbReference type="InParanoid" id="P72785"/>
<dbReference type="PhylomeDB" id="P72785"/>
<dbReference type="Proteomes" id="UP000001425">
    <property type="component" value="Chromosome"/>
</dbReference>
<dbReference type="GO" id="GO:0005737">
    <property type="term" value="C:cytoplasm"/>
    <property type="evidence" value="ECO:0007669"/>
    <property type="project" value="UniProtKB-SubCell"/>
</dbReference>
<dbReference type="GO" id="GO:0004134">
    <property type="term" value="F:4-alpha-glucanotransferase activity"/>
    <property type="evidence" value="ECO:0007669"/>
    <property type="project" value="UniProtKB-EC"/>
</dbReference>
<dbReference type="GO" id="GO:0005975">
    <property type="term" value="P:carbohydrate metabolic process"/>
    <property type="evidence" value="ECO:0007669"/>
    <property type="project" value="InterPro"/>
</dbReference>
<dbReference type="Gene3D" id="3.20.20.80">
    <property type="entry name" value="Glycosidases"/>
    <property type="match status" value="1"/>
</dbReference>
<dbReference type="InterPro" id="IPR003385">
    <property type="entry name" value="Glyco_hydro_77"/>
</dbReference>
<dbReference type="InterPro" id="IPR017853">
    <property type="entry name" value="Glycoside_hydrolase_SF"/>
</dbReference>
<dbReference type="NCBIfam" id="TIGR00217">
    <property type="entry name" value="malQ"/>
    <property type="match status" value="1"/>
</dbReference>
<dbReference type="NCBIfam" id="NF011079">
    <property type="entry name" value="PRK14508.1-2"/>
    <property type="match status" value="1"/>
</dbReference>
<dbReference type="NCBIfam" id="NF011080">
    <property type="entry name" value="PRK14508.1-3"/>
    <property type="match status" value="1"/>
</dbReference>
<dbReference type="PANTHER" id="PTHR32438">
    <property type="entry name" value="4-ALPHA-GLUCANOTRANSFERASE DPE1, CHLOROPLASTIC/AMYLOPLASTIC"/>
    <property type="match status" value="1"/>
</dbReference>
<dbReference type="PANTHER" id="PTHR32438:SF5">
    <property type="entry name" value="4-ALPHA-GLUCANOTRANSFERASE DPE1, CHLOROPLASTIC_AMYLOPLASTIC"/>
    <property type="match status" value="1"/>
</dbReference>
<dbReference type="Pfam" id="PF02446">
    <property type="entry name" value="Glyco_hydro_77"/>
    <property type="match status" value="1"/>
</dbReference>
<dbReference type="SUPFAM" id="SSF51445">
    <property type="entry name" value="(Trans)glycosidases"/>
    <property type="match status" value="1"/>
</dbReference>
<gene>
    <name type="primary">malQ</name>
    <name type="ordered locus">sll1676</name>
</gene>
<keyword id="KW-0119">Carbohydrate metabolism</keyword>
<keyword id="KW-0963">Cytoplasm</keyword>
<keyword id="KW-0328">Glycosyltransferase</keyword>
<keyword id="KW-1185">Reference proteome</keyword>
<keyword id="KW-0808">Transferase</keyword>